<protein>
    <recommendedName>
        <fullName evidence="1">Global transcriptional regulator CodY</fullName>
    </recommendedName>
</protein>
<organism>
    <name type="scientific">Streptococcus pyogenes serotype M3 (strain ATCC BAA-595 / MGAS315)</name>
    <dbReference type="NCBI Taxonomy" id="198466"/>
    <lineage>
        <taxon>Bacteria</taxon>
        <taxon>Bacillati</taxon>
        <taxon>Bacillota</taxon>
        <taxon>Bacilli</taxon>
        <taxon>Lactobacillales</taxon>
        <taxon>Streptococcaceae</taxon>
        <taxon>Streptococcus</taxon>
    </lineage>
</organism>
<keyword id="KW-0963">Cytoplasm</keyword>
<keyword id="KW-0238">DNA-binding</keyword>
<keyword id="KW-0678">Repressor</keyword>
<keyword id="KW-0804">Transcription</keyword>
<keyword id="KW-0805">Transcription regulation</keyword>
<accession>P0DA46</accession>
<accession>P0A350</accession>
<accession>Q99YB7</accession>
<sequence>MPNLLEKTRKITSILQRSVDSLETELPYNTMASRLADIIDCNACIINGGGTLLGYAMKYKTNTDRVEEFFEAKQFPDTYVKAASRVYDTEANLSVENELTIFPVESKDTYPGGLTTIAPIYGGGMRLGSLIIWRNDNEFSDDDLILVEISSTVVGIQLLNLQTENLEDTIRKQTAVNMAINTLSYSEMKAVAAILGELDGNEGRLTASVIADRIGITRSVIVNALRKLESAGIIESRSLGMKGTYLKVINEGIFAKLKEF</sequence>
<gene>
    <name evidence="1" type="primary">codY</name>
    <name type="ordered locus">SpyM3_1544</name>
</gene>
<feature type="chain" id="PRO_0000213245" description="Global transcriptional regulator CodY">
    <location>
        <begin position="1"/>
        <end position="260"/>
    </location>
</feature>
<feature type="DNA-binding region" description="H-T-H motif" evidence="1">
    <location>
        <begin position="207"/>
        <end position="226"/>
    </location>
</feature>
<feature type="region of interest" description="GAF domain" evidence="1">
    <location>
        <begin position="1"/>
        <end position="159"/>
    </location>
</feature>
<proteinExistence type="inferred from homology"/>
<evidence type="ECO:0000255" key="1">
    <source>
        <dbReference type="HAMAP-Rule" id="MF_00621"/>
    </source>
</evidence>
<comment type="function">
    <text evidence="1">DNA-binding global transcriptional regulator which is involved in the adaptive response to starvation and acts by directly or indirectly controlling the expression of numerous genes in response to nutrient availability. During rapid exponential growth, CodY is highly active and represses genes whose products allow adaptation to nutrient depletion.</text>
</comment>
<comment type="subcellular location">
    <subcellularLocation>
        <location evidence="1">Cytoplasm</location>
    </subcellularLocation>
</comment>
<comment type="similarity">
    <text evidence="1">Belongs to the CodY family.</text>
</comment>
<reference key="1">
    <citation type="journal article" date="2002" name="Proc. Natl. Acad. Sci. U.S.A.">
        <title>Genome sequence of a serotype M3 strain of group A Streptococcus: phage-encoded toxins, the high-virulence phenotype, and clone emergence.</title>
        <authorList>
            <person name="Beres S.B."/>
            <person name="Sylva G.L."/>
            <person name="Barbian K.D."/>
            <person name="Lei B."/>
            <person name="Hoff J.S."/>
            <person name="Mammarella N.D."/>
            <person name="Liu M.-Y."/>
            <person name="Smoot J.C."/>
            <person name="Porcella S.F."/>
            <person name="Parkins L.D."/>
            <person name="Campbell D.S."/>
            <person name="Smith T.M."/>
            <person name="McCormick J.K."/>
            <person name="Leung D.Y.M."/>
            <person name="Schlievert P.M."/>
            <person name="Musser J.M."/>
        </authorList>
    </citation>
    <scope>NUCLEOTIDE SEQUENCE [LARGE SCALE GENOMIC DNA]</scope>
    <source>
        <strain>ATCC BAA-595 / MGAS315</strain>
    </source>
</reference>
<dbReference type="EMBL" id="AE014074">
    <property type="protein sequence ID" value="AAM80151.1"/>
    <property type="molecule type" value="Genomic_DNA"/>
</dbReference>
<dbReference type="RefSeq" id="WP_002983278.1">
    <property type="nucleotide sequence ID" value="NC_004070.1"/>
</dbReference>
<dbReference type="SMR" id="P0DA46"/>
<dbReference type="KEGG" id="spg:SpyM3_1544"/>
<dbReference type="HOGENOM" id="CLU_089581_0_0_9"/>
<dbReference type="Proteomes" id="UP000000564">
    <property type="component" value="Chromosome"/>
</dbReference>
<dbReference type="GO" id="GO:0005737">
    <property type="term" value="C:cytoplasm"/>
    <property type="evidence" value="ECO:0007669"/>
    <property type="project" value="UniProtKB-SubCell"/>
</dbReference>
<dbReference type="GO" id="GO:0003677">
    <property type="term" value="F:DNA binding"/>
    <property type="evidence" value="ECO:0007669"/>
    <property type="project" value="UniProtKB-UniRule"/>
</dbReference>
<dbReference type="GO" id="GO:0003700">
    <property type="term" value="F:DNA-binding transcription factor activity"/>
    <property type="evidence" value="ECO:0007669"/>
    <property type="project" value="InterPro"/>
</dbReference>
<dbReference type="GO" id="GO:0005525">
    <property type="term" value="F:GTP binding"/>
    <property type="evidence" value="ECO:0007669"/>
    <property type="project" value="InterPro"/>
</dbReference>
<dbReference type="GO" id="GO:0045892">
    <property type="term" value="P:negative regulation of DNA-templated transcription"/>
    <property type="evidence" value="ECO:0007669"/>
    <property type="project" value="UniProtKB-UniRule"/>
</dbReference>
<dbReference type="CDD" id="cd00090">
    <property type="entry name" value="HTH_ARSR"/>
    <property type="match status" value="1"/>
</dbReference>
<dbReference type="FunFam" id="1.10.10.10:FF:000034">
    <property type="entry name" value="GTP-sensing transcriptional pleiotropic repressor CodY"/>
    <property type="match status" value="1"/>
</dbReference>
<dbReference type="FunFam" id="3.30.450.40:FF:000003">
    <property type="entry name" value="GTP-sensing transcriptional pleiotropic repressor CodY"/>
    <property type="match status" value="1"/>
</dbReference>
<dbReference type="Gene3D" id="3.30.450.40">
    <property type="match status" value="1"/>
</dbReference>
<dbReference type="Gene3D" id="1.10.10.10">
    <property type="entry name" value="Winged helix-like DNA-binding domain superfamily/Winged helix DNA-binding domain"/>
    <property type="match status" value="1"/>
</dbReference>
<dbReference type="HAMAP" id="MF_00621">
    <property type="entry name" value="HTH_type_CodY"/>
    <property type="match status" value="1"/>
</dbReference>
<dbReference type="InterPro" id="IPR011991">
    <property type="entry name" value="ArsR-like_HTH"/>
</dbReference>
<dbReference type="InterPro" id="IPR014154">
    <property type="entry name" value="CodY"/>
</dbReference>
<dbReference type="InterPro" id="IPR029016">
    <property type="entry name" value="GAF-like_dom_sf"/>
</dbReference>
<dbReference type="InterPro" id="IPR013198">
    <property type="entry name" value="GTP_trans_reg_CodY_C"/>
</dbReference>
<dbReference type="InterPro" id="IPR010312">
    <property type="entry name" value="Transc_reg_CodY_N"/>
</dbReference>
<dbReference type="InterPro" id="IPR036388">
    <property type="entry name" value="WH-like_DNA-bd_sf"/>
</dbReference>
<dbReference type="InterPro" id="IPR036390">
    <property type="entry name" value="WH_DNA-bd_sf"/>
</dbReference>
<dbReference type="NCBIfam" id="TIGR02787">
    <property type="entry name" value="codY_Gpos"/>
    <property type="match status" value="1"/>
</dbReference>
<dbReference type="NCBIfam" id="NF003170">
    <property type="entry name" value="PRK04158.1"/>
    <property type="match status" value="1"/>
</dbReference>
<dbReference type="PANTHER" id="PTHR40062:SF1">
    <property type="entry name" value="GLOBAL TRANSCRIPTIONAL REGULATOR CODY"/>
    <property type="match status" value="1"/>
</dbReference>
<dbReference type="PANTHER" id="PTHR40062">
    <property type="entry name" value="GTP-SENSING TRANSCRIPTIONAL PLEIOTROPIC REPRESSOR CODY"/>
    <property type="match status" value="1"/>
</dbReference>
<dbReference type="Pfam" id="PF06018">
    <property type="entry name" value="CodY"/>
    <property type="match status" value="1"/>
</dbReference>
<dbReference type="Pfam" id="PF08222">
    <property type="entry name" value="HTH_CodY"/>
    <property type="match status" value="1"/>
</dbReference>
<dbReference type="PIRSF" id="PIRSF011572">
    <property type="entry name" value="GTP_sensing_CodY"/>
    <property type="match status" value="1"/>
</dbReference>
<dbReference type="SUPFAM" id="SSF46785">
    <property type="entry name" value="Winged helix' DNA-binding domain"/>
    <property type="match status" value="1"/>
</dbReference>
<name>CODY_STRP3</name>